<sequence length="122" mass="13361">MTQSTTEDTLLRLAAVIDSRKGGDPEQSYVSRLFHKGDDAILKKIGEEATEVVLAAKDVRQGGAPSALVGEVADLWFHCLVALSHFDLSPADVIAELERREGMSGIEEKALRKRREREENGG</sequence>
<feature type="chain" id="PRO_1000063331" description="Phosphoribosyl-ATP pyrophosphatase">
    <location>
        <begin position="1"/>
        <end position="122"/>
    </location>
</feature>
<accession>A3NE91</accession>
<gene>
    <name evidence="1" type="primary">hisE</name>
    <name type="ordered locus">BURPS668_3658</name>
</gene>
<organism>
    <name type="scientific">Burkholderia pseudomallei (strain 668)</name>
    <dbReference type="NCBI Taxonomy" id="320373"/>
    <lineage>
        <taxon>Bacteria</taxon>
        <taxon>Pseudomonadati</taxon>
        <taxon>Pseudomonadota</taxon>
        <taxon>Betaproteobacteria</taxon>
        <taxon>Burkholderiales</taxon>
        <taxon>Burkholderiaceae</taxon>
        <taxon>Burkholderia</taxon>
        <taxon>pseudomallei group</taxon>
    </lineage>
</organism>
<evidence type="ECO:0000255" key="1">
    <source>
        <dbReference type="HAMAP-Rule" id="MF_01020"/>
    </source>
</evidence>
<reference key="1">
    <citation type="journal article" date="2010" name="Genome Biol. Evol.">
        <title>Continuing evolution of Burkholderia mallei through genome reduction and large-scale rearrangements.</title>
        <authorList>
            <person name="Losada L."/>
            <person name="Ronning C.M."/>
            <person name="DeShazer D."/>
            <person name="Woods D."/>
            <person name="Fedorova N."/>
            <person name="Kim H.S."/>
            <person name="Shabalina S.A."/>
            <person name="Pearson T.R."/>
            <person name="Brinkac L."/>
            <person name="Tan P."/>
            <person name="Nandi T."/>
            <person name="Crabtree J."/>
            <person name="Badger J."/>
            <person name="Beckstrom-Sternberg S."/>
            <person name="Saqib M."/>
            <person name="Schutzer S.E."/>
            <person name="Keim P."/>
            <person name="Nierman W.C."/>
        </authorList>
    </citation>
    <scope>NUCLEOTIDE SEQUENCE [LARGE SCALE GENOMIC DNA]</scope>
    <source>
        <strain>668</strain>
    </source>
</reference>
<comment type="catalytic activity">
    <reaction evidence="1">
        <text>1-(5-phospho-beta-D-ribosyl)-ATP + H2O = 1-(5-phospho-beta-D-ribosyl)-5'-AMP + diphosphate + H(+)</text>
        <dbReference type="Rhea" id="RHEA:22828"/>
        <dbReference type="ChEBI" id="CHEBI:15377"/>
        <dbReference type="ChEBI" id="CHEBI:15378"/>
        <dbReference type="ChEBI" id="CHEBI:33019"/>
        <dbReference type="ChEBI" id="CHEBI:59457"/>
        <dbReference type="ChEBI" id="CHEBI:73183"/>
        <dbReference type="EC" id="3.6.1.31"/>
    </reaction>
</comment>
<comment type="pathway">
    <text evidence="1">Amino-acid biosynthesis; L-histidine biosynthesis; L-histidine from 5-phospho-alpha-D-ribose 1-diphosphate: step 2/9.</text>
</comment>
<comment type="subcellular location">
    <subcellularLocation>
        <location evidence="1">Cytoplasm</location>
    </subcellularLocation>
</comment>
<comment type="similarity">
    <text evidence="1">Belongs to the PRA-PH family.</text>
</comment>
<keyword id="KW-0028">Amino-acid biosynthesis</keyword>
<keyword id="KW-0067">ATP-binding</keyword>
<keyword id="KW-0963">Cytoplasm</keyword>
<keyword id="KW-0368">Histidine biosynthesis</keyword>
<keyword id="KW-0378">Hydrolase</keyword>
<keyword id="KW-0547">Nucleotide-binding</keyword>
<name>HIS2_BURP6</name>
<dbReference type="EC" id="3.6.1.31" evidence="1"/>
<dbReference type="EMBL" id="CP000570">
    <property type="protein sequence ID" value="ABN82959.1"/>
    <property type="molecule type" value="Genomic_DNA"/>
</dbReference>
<dbReference type="RefSeq" id="WP_004202813.1">
    <property type="nucleotide sequence ID" value="NC_009074.1"/>
</dbReference>
<dbReference type="SMR" id="A3NE91"/>
<dbReference type="KEGG" id="bpd:BURPS668_3658"/>
<dbReference type="HOGENOM" id="CLU_123337_1_2_4"/>
<dbReference type="UniPathway" id="UPA00031">
    <property type="reaction ID" value="UER00007"/>
</dbReference>
<dbReference type="GO" id="GO:0005737">
    <property type="term" value="C:cytoplasm"/>
    <property type="evidence" value="ECO:0007669"/>
    <property type="project" value="UniProtKB-SubCell"/>
</dbReference>
<dbReference type="GO" id="GO:0005524">
    <property type="term" value="F:ATP binding"/>
    <property type="evidence" value="ECO:0007669"/>
    <property type="project" value="UniProtKB-KW"/>
</dbReference>
<dbReference type="GO" id="GO:0004636">
    <property type="term" value="F:phosphoribosyl-ATP diphosphatase activity"/>
    <property type="evidence" value="ECO:0007669"/>
    <property type="project" value="UniProtKB-UniRule"/>
</dbReference>
<dbReference type="GO" id="GO:0000105">
    <property type="term" value="P:L-histidine biosynthetic process"/>
    <property type="evidence" value="ECO:0007669"/>
    <property type="project" value="UniProtKB-UniRule"/>
</dbReference>
<dbReference type="CDD" id="cd11534">
    <property type="entry name" value="NTP-PPase_HisIE_like"/>
    <property type="match status" value="1"/>
</dbReference>
<dbReference type="Gene3D" id="1.10.287.1080">
    <property type="entry name" value="MazG-like"/>
    <property type="match status" value="1"/>
</dbReference>
<dbReference type="HAMAP" id="MF_01020">
    <property type="entry name" value="HisE"/>
    <property type="match status" value="1"/>
</dbReference>
<dbReference type="InterPro" id="IPR008179">
    <property type="entry name" value="HisE"/>
</dbReference>
<dbReference type="InterPro" id="IPR021130">
    <property type="entry name" value="PRib-ATP_PPHydrolase-like"/>
</dbReference>
<dbReference type="NCBIfam" id="TIGR03188">
    <property type="entry name" value="histidine_hisI"/>
    <property type="match status" value="1"/>
</dbReference>
<dbReference type="NCBIfam" id="NF001611">
    <property type="entry name" value="PRK00400.1-3"/>
    <property type="match status" value="1"/>
</dbReference>
<dbReference type="PANTHER" id="PTHR42945">
    <property type="entry name" value="HISTIDINE BIOSYNTHESIS BIFUNCTIONAL PROTEIN"/>
    <property type="match status" value="1"/>
</dbReference>
<dbReference type="PANTHER" id="PTHR42945:SF9">
    <property type="entry name" value="HISTIDINE BIOSYNTHESIS BIFUNCTIONAL PROTEIN HISIE"/>
    <property type="match status" value="1"/>
</dbReference>
<dbReference type="Pfam" id="PF01503">
    <property type="entry name" value="PRA-PH"/>
    <property type="match status" value="1"/>
</dbReference>
<dbReference type="SUPFAM" id="SSF101386">
    <property type="entry name" value="all-alpha NTP pyrophosphatases"/>
    <property type="match status" value="1"/>
</dbReference>
<proteinExistence type="inferred from homology"/>
<protein>
    <recommendedName>
        <fullName evidence="1">Phosphoribosyl-ATP pyrophosphatase</fullName>
        <shortName evidence="1">PRA-PH</shortName>
        <ecNumber evidence="1">3.6.1.31</ecNumber>
    </recommendedName>
</protein>